<proteinExistence type="inferred from homology"/>
<organism>
    <name type="scientific">Shigella flexneri</name>
    <dbReference type="NCBI Taxonomy" id="623"/>
    <lineage>
        <taxon>Bacteria</taxon>
        <taxon>Pseudomonadati</taxon>
        <taxon>Pseudomonadota</taxon>
        <taxon>Gammaproteobacteria</taxon>
        <taxon>Enterobacterales</taxon>
        <taxon>Enterobacteriaceae</taxon>
        <taxon>Shigella</taxon>
    </lineage>
</organism>
<gene>
    <name evidence="2" type="primary">pgsA</name>
    <name type="ordered locus">SF1955</name>
    <name type="ordered locus">S2051</name>
</gene>
<accession>Q83R47</accession>
<accession>Q7C173</accession>
<feature type="initiator methionine" description="Removed" evidence="1">
    <location>
        <position position="1"/>
    </location>
</feature>
<feature type="chain" id="PRO_0000239131" description="CDP-diacylglycerol--glycerol-3-phosphate 3-phosphatidyltransferase">
    <location>
        <begin position="2"/>
        <end position="182"/>
    </location>
</feature>
<feature type="topological domain" description="Cytoplasmic" evidence="2">
    <location>
        <begin position="2"/>
        <end position="12"/>
    </location>
</feature>
<feature type="transmembrane region" description="Helical" evidence="2">
    <location>
        <begin position="13"/>
        <end position="37"/>
    </location>
</feature>
<feature type="topological domain" description="Periplasmic" evidence="2">
    <location>
        <begin position="38"/>
        <end position="60"/>
    </location>
</feature>
<feature type="transmembrane region" description="Helical" evidence="2">
    <location>
        <begin position="61"/>
        <end position="81"/>
    </location>
</feature>
<feature type="topological domain" description="Cytoplasmic" evidence="2">
    <location>
        <begin position="82"/>
        <end position="86"/>
    </location>
</feature>
<feature type="transmembrane region" description="Helical" evidence="2">
    <location>
        <begin position="87"/>
        <end position="107"/>
    </location>
</feature>
<feature type="topological domain" description="Periplasmic" evidence="2">
    <location>
        <begin position="108"/>
        <end position="145"/>
    </location>
</feature>
<feature type="transmembrane region" description="Helical" evidence="2">
    <location>
        <begin position="146"/>
        <end position="168"/>
    </location>
</feature>
<feature type="topological domain" description="Cytoplasmic" evidence="2">
    <location>
        <begin position="169"/>
        <end position="181"/>
    </location>
</feature>
<protein>
    <recommendedName>
        <fullName evidence="2">CDP-diacylglycerol--glycerol-3-phosphate 3-phosphatidyltransferase</fullName>
        <ecNumber evidence="2">2.7.8.5</ecNumber>
    </recommendedName>
    <alternativeName>
        <fullName evidence="2">Phosphatidylglycerophosphate synthase</fullName>
        <shortName evidence="2">PGP synthase</shortName>
    </alternativeName>
</protein>
<comment type="function">
    <text evidence="2">Catalyzes the conversion of cytidine diphosphate diacylglycerol (CDP-DG) and glycerol 3-phosphate into phosphatidylglycerol. Essential for the synthesis of anionic phospholipids, thereby playing a role in balancing the ratio of zwitterionic and anionic phospholipids, which is thought to be important for normal membrane function.</text>
</comment>
<comment type="catalytic activity">
    <reaction evidence="2">
        <text>a CDP-1,2-diacyl-sn-glycerol + sn-glycerol 3-phosphate = a 1,2-diacyl-sn-glycero-3-phospho-(1'-sn-glycero-3'-phosphate) + CMP + H(+)</text>
        <dbReference type="Rhea" id="RHEA:12593"/>
        <dbReference type="ChEBI" id="CHEBI:15378"/>
        <dbReference type="ChEBI" id="CHEBI:57597"/>
        <dbReference type="ChEBI" id="CHEBI:58332"/>
        <dbReference type="ChEBI" id="CHEBI:60110"/>
        <dbReference type="ChEBI" id="CHEBI:60377"/>
        <dbReference type="EC" id="2.7.8.5"/>
    </reaction>
</comment>
<comment type="pathway">
    <text evidence="2">Phospholipid metabolism; phosphatidylglycerol biosynthesis; phosphatidylglycerol from CDP-diacylglycerol: step 1/2.</text>
</comment>
<comment type="subcellular location">
    <subcellularLocation>
        <location evidence="2">Cell inner membrane</location>
        <topology evidence="2">Multi-pass membrane protein</topology>
    </subcellularLocation>
</comment>
<comment type="similarity">
    <text evidence="2">Belongs to the CDP-alcohol phosphatidyltransferase class-I family.</text>
</comment>
<reference key="1">
    <citation type="journal article" date="2002" name="Nucleic Acids Res.">
        <title>Genome sequence of Shigella flexneri 2a: insights into pathogenicity through comparison with genomes of Escherichia coli K12 and O157.</title>
        <authorList>
            <person name="Jin Q."/>
            <person name="Yuan Z."/>
            <person name="Xu J."/>
            <person name="Wang Y."/>
            <person name="Shen Y."/>
            <person name="Lu W."/>
            <person name="Wang J."/>
            <person name="Liu H."/>
            <person name="Yang J."/>
            <person name="Yang F."/>
            <person name="Zhang X."/>
            <person name="Zhang J."/>
            <person name="Yang G."/>
            <person name="Wu H."/>
            <person name="Qu D."/>
            <person name="Dong J."/>
            <person name="Sun L."/>
            <person name="Xue Y."/>
            <person name="Zhao A."/>
            <person name="Gao Y."/>
            <person name="Zhu J."/>
            <person name="Kan B."/>
            <person name="Ding K."/>
            <person name="Chen S."/>
            <person name="Cheng H."/>
            <person name="Yao Z."/>
            <person name="He B."/>
            <person name="Chen R."/>
            <person name="Ma D."/>
            <person name="Qiang B."/>
            <person name="Wen Y."/>
            <person name="Hou Y."/>
            <person name="Yu J."/>
        </authorList>
    </citation>
    <scope>NUCLEOTIDE SEQUENCE [LARGE SCALE GENOMIC DNA]</scope>
    <source>
        <strain>301 / Serotype 2a</strain>
    </source>
</reference>
<reference key="2">
    <citation type="journal article" date="2003" name="Infect. Immun.">
        <title>Complete genome sequence and comparative genomics of Shigella flexneri serotype 2a strain 2457T.</title>
        <authorList>
            <person name="Wei J."/>
            <person name="Goldberg M.B."/>
            <person name="Burland V."/>
            <person name="Venkatesan M.M."/>
            <person name="Deng W."/>
            <person name="Fournier G."/>
            <person name="Mayhew G.F."/>
            <person name="Plunkett G. III"/>
            <person name="Rose D.J."/>
            <person name="Darling A."/>
            <person name="Mau B."/>
            <person name="Perna N.T."/>
            <person name="Payne S.M."/>
            <person name="Runyen-Janecky L.J."/>
            <person name="Zhou S."/>
            <person name="Schwartz D.C."/>
            <person name="Blattner F.R."/>
        </authorList>
    </citation>
    <scope>NUCLEOTIDE SEQUENCE [LARGE SCALE GENOMIC DNA]</scope>
    <source>
        <strain>ATCC 700930 / 2457T / Serotype 2a</strain>
    </source>
</reference>
<dbReference type="EC" id="2.7.8.5" evidence="2"/>
<dbReference type="EMBL" id="AE005674">
    <property type="protein sequence ID" value="AAN43506.1"/>
    <property type="molecule type" value="Genomic_DNA"/>
</dbReference>
<dbReference type="EMBL" id="AE014073">
    <property type="protein sequence ID" value="AAP17336.1"/>
    <property type="molecule type" value="Genomic_DNA"/>
</dbReference>
<dbReference type="RefSeq" id="NP_707799.1">
    <property type="nucleotide sequence ID" value="NC_004337.2"/>
</dbReference>
<dbReference type="RefSeq" id="WP_001160190.1">
    <property type="nucleotide sequence ID" value="NZ_WPGW01000033.1"/>
</dbReference>
<dbReference type="SMR" id="Q83R47"/>
<dbReference type="STRING" id="198214.SF1955"/>
<dbReference type="PaxDb" id="198214-SF1955"/>
<dbReference type="GeneID" id="1025192"/>
<dbReference type="KEGG" id="sfl:SF1955"/>
<dbReference type="KEGG" id="sfx:S2051"/>
<dbReference type="PATRIC" id="fig|198214.7.peg.2334"/>
<dbReference type="HOGENOM" id="CLU_051314_2_1_6"/>
<dbReference type="UniPathway" id="UPA00084">
    <property type="reaction ID" value="UER00503"/>
</dbReference>
<dbReference type="Proteomes" id="UP000001006">
    <property type="component" value="Chromosome"/>
</dbReference>
<dbReference type="Proteomes" id="UP000002673">
    <property type="component" value="Chromosome"/>
</dbReference>
<dbReference type="GO" id="GO:0005886">
    <property type="term" value="C:plasma membrane"/>
    <property type="evidence" value="ECO:0007669"/>
    <property type="project" value="UniProtKB-SubCell"/>
</dbReference>
<dbReference type="GO" id="GO:0008444">
    <property type="term" value="F:CDP-diacylglycerol-glycerol-3-phosphate 3-phosphatidyltransferase activity"/>
    <property type="evidence" value="ECO:0007669"/>
    <property type="project" value="UniProtKB-UniRule"/>
</dbReference>
<dbReference type="GO" id="GO:0006655">
    <property type="term" value="P:phosphatidylglycerol biosynthetic process"/>
    <property type="evidence" value="ECO:0007669"/>
    <property type="project" value="UniProtKB-UniRule"/>
</dbReference>
<dbReference type="FunFam" id="1.20.120.1760:FF:000001">
    <property type="entry name" value="CDP-diacylglycerol--glycerol-3-phosphate 3-phosphatidyltransferase"/>
    <property type="match status" value="1"/>
</dbReference>
<dbReference type="Gene3D" id="1.20.120.1760">
    <property type="match status" value="1"/>
</dbReference>
<dbReference type="HAMAP" id="MF_01437">
    <property type="entry name" value="PgsA"/>
    <property type="match status" value="1"/>
</dbReference>
<dbReference type="InterPro" id="IPR050324">
    <property type="entry name" value="CDP-alcohol_PTase-I"/>
</dbReference>
<dbReference type="InterPro" id="IPR000462">
    <property type="entry name" value="CDP-OH_P_trans"/>
</dbReference>
<dbReference type="InterPro" id="IPR043130">
    <property type="entry name" value="CDP-OH_PTrfase_TM_dom"/>
</dbReference>
<dbReference type="InterPro" id="IPR048254">
    <property type="entry name" value="CDP_ALCOHOL_P_TRANSF_CS"/>
</dbReference>
<dbReference type="InterPro" id="IPR023762">
    <property type="entry name" value="PGP_synthase_bac"/>
</dbReference>
<dbReference type="InterPro" id="IPR004570">
    <property type="entry name" value="Phosphatidylglycerol_P_synth"/>
</dbReference>
<dbReference type="NCBIfam" id="TIGR00560">
    <property type="entry name" value="pgsA"/>
    <property type="match status" value="1"/>
</dbReference>
<dbReference type="NCBIfam" id="NF008090">
    <property type="entry name" value="PRK10832.1"/>
    <property type="match status" value="1"/>
</dbReference>
<dbReference type="PANTHER" id="PTHR14269:SF62">
    <property type="entry name" value="CDP-DIACYLGLYCEROL--GLYCEROL-3-PHOSPHATE 3-PHOSPHATIDYLTRANSFERASE 1, CHLOROPLASTIC"/>
    <property type="match status" value="1"/>
</dbReference>
<dbReference type="PANTHER" id="PTHR14269">
    <property type="entry name" value="CDP-DIACYLGLYCEROL--GLYCEROL-3-PHOSPHATE 3-PHOSPHATIDYLTRANSFERASE-RELATED"/>
    <property type="match status" value="1"/>
</dbReference>
<dbReference type="Pfam" id="PF01066">
    <property type="entry name" value="CDP-OH_P_transf"/>
    <property type="match status" value="1"/>
</dbReference>
<dbReference type="PIRSF" id="PIRSF000847">
    <property type="entry name" value="Phos_ph_gly_syn"/>
    <property type="match status" value="1"/>
</dbReference>
<dbReference type="PROSITE" id="PS00379">
    <property type="entry name" value="CDP_ALCOHOL_P_TRANSF"/>
    <property type="match status" value="1"/>
</dbReference>
<sequence>MQFNIPTLLTLFRVILIPFFVLVFYLPVTWSPFAAALIFCVAAVTDWFDGFLARRWNQSTRFGAFLDPVADKVLVAIAMVLVTEHYHSWWVTLPAATMIAREIIISALREWMAELGKRSSVAVSWIGKVKTTAQMVALAWLLWRPNIWVEYVGIALFFVAAVLTLWSMLQYLSAARADLLDQ</sequence>
<keyword id="KW-0997">Cell inner membrane</keyword>
<keyword id="KW-1003">Cell membrane</keyword>
<keyword id="KW-0444">Lipid biosynthesis</keyword>
<keyword id="KW-0443">Lipid metabolism</keyword>
<keyword id="KW-0472">Membrane</keyword>
<keyword id="KW-0594">Phospholipid biosynthesis</keyword>
<keyword id="KW-1208">Phospholipid metabolism</keyword>
<keyword id="KW-1185">Reference proteome</keyword>
<keyword id="KW-0808">Transferase</keyword>
<keyword id="KW-0812">Transmembrane</keyword>
<keyword id="KW-1133">Transmembrane helix</keyword>
<name>PGSA_SHIFL</name>
<evidence type="ECO:0000250" key="1"/>
<evidence type="ECO:0000255" key="2">
    <source>
        <dbReference type="HAMAP-Rule" id="MF_01437"/>
    </source>
</evidence>